<organism evidence="7">
    <name type="scientific">Bos taurus</name>
    <name type="common">Bovine</name>
    <dbReference type="NCBI Taxonomy" id="9913"/>
    <lineage>
        <taxon>Eukaryota</taxon>
        <taxon>Metazoa</taxon>
        <taxon>Chordata</taxon>
        <taxon>Craniata</taxon>
        <taxon>Vertebrata</taxon>
        <taxon>Euteleostomi</taxon>
        <taxon>Mammalia</taxon>
        <taxon>Eutheria</taxon>
        <taxon>Laurasiatheria</taxon>
        <taxon>Artiodactyla</taxon>
        <taxon>Ruminantia</taxon>
        <taxon>Pecora</taxon>
        <taxon>Bovidae</taxon>
        <taxon>Bovinae</taxon>
        <taxon>Bos</taxon>
    </lineage>
</organism>
<protein>
    <recommendedName>
        <fullName>Cilia- and flagella-associated protein 45</fullName>
    </recommendedName>
</protein>
<keyword id="KW-0002">3D-structure</keyword>
<keyword id="KW-0966">Cell projection</keyword>
<keyword id="KW-0969">Cilium</keyword>
<keyword id="KW-0175">Coiled coil</keyword>
<keyword id="KW-0963">Cytoplasm</keyword>
<keyword id="KW-0206">Cytoskeleton</keyword>
<keyword id="KW-0282">Flagellum</keyword>
<keyword id="KW-1185">Reference proteome</keyword>
<sequence>MPLSTAGVLSSASTASNRSRNRPRYRTKALSSEVDESLFGAIKPLTRSDSPIVLLRDKHAIRKTLTALGLDHKPETIQLITRDMVRELIIPTKDPSGQSLIMSPEEFERIKWASHVLTKEELEAREQAFKKEKEAIVDTVTTRKKIMKQKEMVWRNNRKLSDLEEVAKERAQNLLQRANQLRMEQEEELKDMKKIILNAKCHAIRDAQILEKQLIQKELDAEEKRLDQMMEVERQKSVQRQEELDRKRREERIRGRRHIVEQMEKNQEERSLLAEQREQEKEQMLEYMEKLQEEDLRDLEQRHQQKLKMQAEIKRINDENQRQKAELLAQEKLADQMVMEFTKKKMAREAEFEAEQERIRREKEKEIARLRAMQEKAQDYQAEQDALRAKRNQEVADREWRRKEKENAQKKMETEAKLRKSRLEQVAFKEHTLAVQVQRDRDEFERILRAQREQIEKERLEEEKKATGRLQHANELRRQVRENQQKQVQARIATFDEGRRLKEEAQKRRERIEDIKRKKLEELRATGLPEKYCIEAERKANIPVNTSVN</sequence>
<evidence type="ECO:0000250" key="1">
    <source>
        <dbReference type="UniProtKB" id="Q9UL16"/>
    </source>
</evidence>
<evidence type="ECO:0000255" key="2"/>
<evidence type="ECO:0000256" key="3">
    <source>
        <dbReference type="SAM" id="MobiDB-lite"/>
    </source>
</evidence>
<evidence type="ECO:0000269" key="4">
    <source>
    </source>
</evidence>
<evidence type="ECO:0000269" key="5">
    <source>
    </source>
</evidence>
<evidence type="ECO:0000305" key="6"/>
<evidence type="ECO:0000312" key="7">
    <source>
        <dbReference type="EMBL" id="AAI09499.2"/>
    </source>
</evidence>
<evidence type="ECO:0000312" key="8">
    <source>
        <dbReference type="VGNC" id="VGNC:27244"/>
    </source>
</evidence>
<evidence type="ECO:0007744" key="9">
    <source>
        <dbReference type="PDB" id="7RRO"/>
    </source>
</evidence>
<evidence type="ECO:0007744" key="10">
    <source>
        <dbReference type="PDB" id="8OTZ"/>
    </source>
</evidence>
<comment type="function">
    <text evidence="1 4 5">Microtubule inner protein (MIP) part of the dynein-decorated doublet microtubules (DMTs) in cilia axoneme, which is required for motile cilia beating (PubMed:34715025, PubMed:37327785). It is an AMP-binding protein that may facilitate dynein ATPase-dependent ciliary and flagellar beating via adenine nucleotide homeostasis. May function as a donor of AMP to AK8 and hence promote ADP production (By similarity).</text>
</comment>
<comment type="subunit">
    <text evidence="1 5">Microtubule inner protein component of sperm flagellar doublet microtubules (PubMed:37327785). Interacts with AK8; dimerization with AK8 may create a cavity at the interface of the dimer that can accommodate AMP (By similarity). Interacts with CFAP52 (By similarity). Interacts with ENKUR (By similarity). Directly interacts with DNALI1 (By similarity). Interacts with DNAH11. Interacts with DNAI1 (By similarity).</text>
</comment>
<comment type="subcellular location">
    <subcellularLocation>
        <location evidence="4">Cytoplasm</location>
        <location evidence="4">Cytoskeleton</location>
        <location evidence="4">Cilium axoneme</location>
    </subcellularLocation>
    <subcellularLocation>
        <location evidence="5">Cytoplasm</location>
        <location evidence="5">Cytoskeleton</location>
        <location evidence="5">Flagellum axoneme</location>
    </subcellularLocation>
    <subcellularLocation>
        <location evidence="1">Cell projection</location>
        <location evidence="1">Cilium</location>
    </subcellularLocation>
    <subcellularLocation>
        <location evidence="1">Cell projection</location>
        <location evidence="1">Cilium</location>
        <location evidence="1">Flagellum</location>
    </subcellularLocation>
    <text evidence="1">Located in the proximal region of respiratory cilia.</text>
</comment>
<comment type="tissue specificity">
    <text evidence="4">Expressed in trachea multiciliated cells.</text>
</comment>
<comment type="similarity">
    <text evidence="6">Belongs to the CFAP45 family.</text>
</comment>
<name>CFA45_BOVIN</name>
<dbReference type="EMBL" id="BC109498">
    <property type="protein sequence ID" value="AAI09499.2"/>
    <property type="molecule type" value="mRNA"/>
</dbReference>
<dbReference type="RefSeq" id="NP_001033308.2">
    <property type="nucleotide sequence ID" value="NM_001038219.2"/>
</dbReference>
<dbReference type="PDB" id="7RRO">
    <property type="method" value="EM"/>
    <property type="resolution" value="3.40 A"/>
    <property type="chains" value="a/b/c/d=1-549"/>
</dbReference>
<dbReference type="PDB" id="8OTZ">
    <property type="method" value="EM"/>
    <property type="resolution" value="3.60 A"/>
    <property type="chains" value="a/b/c/d=1-549"/>
</dbReference>
<dbReference type="PDB" id="9CPB">
    <property type="method" value="EM"/>
    <property type="resolution" value="3.52 A"/>
    <property type="chains" value="2J/2K/2L/2M=1-549"/>
</dbReference>
<dbReference type="PDBsum" id="7RRO"/>
<dbReference type="PDBsum" id="8OTZ"/>
<dbReference type="PDBsum" id="9CPB"/>
<dbReference type="EMDB" id="EMD-17187"/>
<dbReference type="EMDB" id="EMD-24664"/>
<dbReference type="EMDB" id="EMD-45801"/>
<dbReference type="EMDB" id="EMD-50664"/>
<dbReference type="SMR" id="Q32LN4"/>
<dbReference type="FunCoup" id="Q32LN4">
    <property type="interactions" value="204"/>
</dbReference>
<dbReference type="PaxDb" id="9913-ENSBTAP00000024603"/>
<dbReference type="Ensembl" id="ENSBTAT00000079630.2">
    <property type="protein sequence ID" value="ENSBTAP00000072198.1"/>
    <property type="gene ID" value="ENSBTAG00000018487.5"/>
</dbReference>
<dbReference type="GeneID" id="617350"/>
<dbReference type="KEGG" id="bta:617350"/>
<dbReference type="CTD" id="25790"/>
<dbReference type="VEuPathDB" id="HostDB:ENSBTAG00000018487"/>
<dbReference type="VGNC" id="VGNC:27244">
    <property type="gene designation" value="CFAP45"/>
</dbReference>
<dbReference type="eggNOG" id="ENOG502QPRZ">
    <property type="taxonomic scope" value="Eukaryota"/>
</dbReference>
<dbReference type="GeneTree" id="ENSGT00730000111174"/>
<dbReference type="HOGENOM" id="CLU_026959_1_1_1"/>
<dbReference type="OrthoDB" id="1902038at2759"/>
<dbReference type="TreeFam" id="TF327685"/>
<dbReference type="Proteomes" id="UP000009136">
    <property type="component" value="Chromosome 3"/>
</dbReference>
<dbReference type="Bgee" id="ENSBTAG00000018487">
    <property type="expression patterns" value="Expressed in oviduct epithelium and 60 other cell types or tissues"/>
</dbReference>
<dbReference type="GO" id="GO:0097728">
    <property type="term" value="C:9+0 motile cilium"/>
    <property type="evidence" value="ECO:0007669"/>
    <property type="project" value="Ensembl"/>
</dbReference>
<dbReference type="GO" id="GO:0160112">
    <property type="term" value="C:axonemal B tubule inner sheath"/>
    <property type="evidence" value="ECO:0000250"/>
    <property type="project" value="UniProtKB"/>
</dbReference>
<dbReference type="GO" id="GO:0005879">
    <property type="term" value="C:axonemal microtubule"/>
    <property type="evidence" value="ECO:0000314"/>
    <property type="project" value="UniProtKB"/>
</dbReference>
<dbReference type="GO" id="GO:0005576">
    <property type="term" value="C:extracellular region"/>
    <property type="evidence" value="ECO:0007669"/>
    <property type="project" value="GOC"/>
</dbReference>
<dbReference type="GO" id="GO:0036126">
    <property type="term" value="C:sperm flagellum"/>
    <property type="evidence" value="ECO:0000250"/>
    <property type="project" value="UniProtKB"/>
</dbReference>
<dbReference type="GO" id="GO:0016208">
    <property type="term" value="F:AMP binding"/>
    <property type="evidence" value="ECO:0007669"/>
    <property type="project" value="Ensembl"/>
</dbReference>
<dbReference type="GO" id="GO:0090660">
    <property type="term" value="P:cerebrospinal fluid circulation"/>
    <property type="evidence" value="ECO:0007669"/>
    <property type="project" value="Ensembl"/>
</dbReference>
<dbReference type="GO" id="GO:0060287">
    <property type="term" value="P:epithelial cilium movement involved in determination of left/right asymmetry"/>
    <property type="evidence" value="ECO:0007669"/>
    <property type="project" value="Ensembl"/>
</dbReference>
<dbReference type="GO" id="GO:0061966">
    <property type="term" value="P:establishment of left/right asymmetry"/>
    <property type="evidence" value="ECO:0007669"/>
    <property type="project" value="Ensembl"/>
</dbReference>
<dbReference type="GO" id="GO:0030317">
    <property type="term" value="P:flagellated sperm motility"/>
    <property type="evidence" value="ECO:0000250"/>
    <property type="project" value="UniProtKB"/>
</dbReference>
<dbReference type="GO" id="GO:0060296">
    <property type="term" value="P:regulation of cilium beat frequency involved in ciliary motility"/>
    <property type="evidence" value="ECO:0007669"/>
    <property type="project" value="Ensembl"/>
</dbReference>
<dbReference type="InterPro" id="IPR033253">
    <property type="entry name" value="CFAP45"/>
</dbReference>
<dbReference type="InterPro" id="IPR043597">
    <property type="entry name" value="TPH_dom"/>
</dbReference>
<dbReference type="PANTHER" id="PTHR15504:SF0">
    <property type="entry name" value="CILIA- AND FLAGELLA-ASSOCIATED PROTEIN 45"/>
    <property type="match status" value="1"/>
</dbReference>
<dbReference type="PANTHER" id="PTHR15504">
    <property type="entry name" value="NASOPHARYNGEAL EPITHELIUM SPECIFIC PROTEIN 1"/>
    <property type="match status" value="1"/>
</dbReference>
<dbReference type="Pfam" id="PF13868">
    <property type="entry name" value="TPH"/>
    <property type="match status" value="1"/>
</dbReference>
<accession>Q32LN4</accession>
<proteinExistence type="evidence at protein level"/>
<feature type="chain" id="PRO_0000456163" description="Cilia- and flagella-associated protein 45">
    <location>
        <begin position="1"/>
        <end position="549"/>
    </location>
</feature>
<feature type="region of interest" description="Disordered" evidence="3">
    <location>
        <begin position="1"/>
        <end position="27"/>
    </location>
</feature>
<feature type="region of interest" description="Disordered" evidence="3">
    <location>
        <begin position="391"/>
        <end position="416"/>
    </location>
</feature>
<feature type="coiled-coil region" evidence="2">
    <location>
        <begin position="119"/>
        <end position="232"/>
    </location>
</feature>
<feature type="coiled-coil region" evidence="2">
    <location>
        <begin position="259"/>
        <end position="393"/>
    </location>
</feature>
<reference key="1">
    <citation type="journal article" date="2009" name="Genome Biol.">
        <title>A whole-genome assembly of the domestic cow, Bos taurus.</title>
        <authorList>
            <person name="Zimin A.V."/>
            <person name="Delcher A.L."/>
            <person name="Florea L."/>
            <person name="Kelley D.R."/>
            <person name="Schatz M.C."/>
            <person name="Puiu D."/>
            <person name="Hanrahan F."/>
            <person name="Pertea G."/>
            <person name="Van Tassell C.P."/>
            <person name="Sonstegard T.S."/>
            <person name="Marcais G."/>
            <person name="Roberts M."/>
            <person name="Subramanian P."/>
            <person name="Yorke J.A."/>
            <person name="Salzberg S.L."/>
        </authorList>
    </citation>
    <scope>NUCLEOTIDE SEQUENCE [LARGE SCALE GENOMIC DNA]</scope>
    <source>
        <strain>Hereford</strain>
    </source>
</reference>
<reference key="2">
    <citation type="submission" date="2005-11" db="EMBL/GenBank/DDBJ databases">
        <authorList>
            <consortium name="NIH - Mammalian Gene Collection (MGC) project"/>
        </authorList>
    </citation>
    <scope>NUCLEOTIDE SEQUENCE [LARGE SCALE MRNA]</scope>
</reference>
<reference evidence="9" key="3">
    <citation type="journal article" date="2021" name="Cell">
        <title>De novo identification of mammalian ciliary motility proteins using cryo-EM.</title>
        <authorList>
            <person name="Gui M."/>
            <person name="Farley H."/>
            <person name="Anujan P."/>
            <person name="Anderson J.R."/>
            <person name="Maxwell D.W."/>
            <person name="Whitchurch J.B."/>
            <person name="Botsch J.J."/>
            <person name="Qiu T."/>
            <person name="Meleppattu S."/>
            <person name="Singh S.K."/>
            <person name="Zhang Q."/>
            <person name="Thompson J."/>
            <person name="Lucas J.S."/>
            <person name="Bingle C.D."/>
            <person name="Norris D.P."/>
            <person name="Roy S."/>
            <person name="Brown A."/>
        </authorList>
    </citation>
    <scope>STRUCTURE BY ELECTRON MICROSCOPY (3.40 ANGSTROMS)</scope>
    <scope>FUNCTION</scope>
    <scope>SUBCELLULAR LOCATION</scope>
    <scope>TISSUE SPECIFICITY</scope>
</reference>
<reference evidence="10" key="4">
    <citation type="journal article" date="2023" name="Cell">
        <title>Structural specializations of the sperm tail.</title>
        <authorList>
            <person name="Leung M.R."/>
            <person name="Zeng J."/>
            <person name="Wang X."/>
            <person name="Roelofs M.C."/>
            <person name="Huang W."/>
            <person name="Zenezini Chiozzi R."/>
            <person name="Hevler J.F."/>
            <person name="Heck A.J.R."/>
            <person name="Dutcher S.K."/>
            <person name="Brown A."/>
            <person name="Zhang R."/>
            <person name="Zeev-Ben-Mordehai T."/>
        </authorList>
    </citation>
    <scope>STRUCTURE BY ELECTRON MICROSCOPY (3.60 ANGSTROMS)</scope>
    <scope>FUNCTION</scope>
    <scope>SUBUNIT</scope>
    <scope>SUBCELLULAR LOCATION</scope>
</reference>
<gene>
    <name evidence="8" type="primary">CFAP45</name>
    <name evidence="7" type="synonym">CCDC19</name>
</gene>